<gene>
    <name type="primary">malH</name>
    <name type="ordered locus">CA_C0533</name>
</gene>
<sequence>MKKFSVVIAGGGSTFTPGIVLMLLDNMDKFPIRKLKFYDNDKERQAIVAGACEIILKEKAPEIEFLATTNPKEAFTDVDFVMAHIRVGKYAMRELDEKIPLKYGVVGQETCGPGGIAYGMRSIGGVIEILDYMEKYSPNAWMLNYSNPAAIVAEATRKLRPNSKILNICDMPIGIETRMAEILGLESRKEMTVKYYGLNHFGWWSDIRDKDGNDLMPKLKEHVKKYGYVAENGDTQHTDASWNDTFAKAKDVYAVDPSTLPNTYLKYYLFPDYVVEHSNKEYTRANEVMDGREKFVFGECKKVIENQSTKGCKMEIDEHASYIVDLARAISYNTHERMLLIVPNNGSIENFDSTGMVEIPCIVGSNGPEPLTMGKIPQFQKGLMEQQVSVEKLVVEAWKEKSYQKLWQAITLSRTVPSAKVAKQILDELIEVNKDYWPELN</sequence>
<evidence type="ECO:0000250" key="1"/>
<evidence type="ECO:0000269" key="2">
    <source>
    </source>
</evidence>
<evidence type="ECO:0000305" key="3"/>
<protein>
    <recommendedName>
        <fullName>Maltose-6'-phosphate glucosidase MalH</fullName>
        <ecNumber>3.2.1.122</ecNumber>
    </recommendedName>
    <alternativeName>
        <fullName>6-phospho-alpha-glucosidase</fullName>
    </alternativeName>
    <alternativeName>
        <fullName>6-phospho-glucosidase</fullName>
    </alternativeName>
    <alternativeName>
        <fullName>Maltose-6-phosphate hydrolase</fullName>
    </alternativeName>
</protein>
<name>MALH_CLOAB</name>
<comment type="function">
    <text>Catalyzes the hydrolysis of O-alpha-linked disaccharide 6-phosphates, including maltose-6'P and all five phosphorylated isomers of sucrose, but not sucrose-6P. Does not hydrolyze beta-linked disaccharide 6-phosphates such as cellobiose-6'P and gentiobiose-6'P. Is involved in the dissimilation of maltose and related O-alpha-linked glucosides produced via the phosphoenolpyruvate-dependent sugar phosphotransferase system (PEP-PTS).</text>
</comment>
<comment type="catalytic activity">
    <reaction>
        <text>alpha-maltose 6'-phosphate + H2O = D-glucose 6-phosphate + D-glucose</text>
        <dbReference type="Rhea" id="RHEA:20421"/>
        <dbReference type="ChEBI" id="CHEBI:4167"/>
        <dbReference type="ChEBI" id="CHEBI:15377"/>
        <dbReference type="ChEBI" id="CHEBI:57478"/>
        <dbReference type="ChEBI" id="CHEBI:61548"/>
        <dbReference type="EC" id="3.2.1.122"/>
    </reaction>
</comment>
<comment type="cofactor">
    <cofactor>
        <name>NAD(+)</name>
        <dbReference type="ChEBI" id="CHEBI:57540"/>
    </cofactor>
    <text>Binds 1 NAD(+) per subunit.</text>
</comment>
<comment type="cofactor">
    <cofactor>
        <name>Mn(2+)</name>
        <dbReference type="ChEBI" id="CHEBI:29035"/>
    </cofactor>
    <text>Binds 1 Mn(2+) ion per subunit.</text>
</comment>
<comment type="biophysicochemical properties">
    <kinetics>
        <KM evidence="2">28.4 uM for p-nitrophenyl-alpha-D-glucopyranoside 6-phosphate</KM>
        <KM evidence="2">1.92 mM for trehalulose-6'P</KM>
        <KM evidence="2">0.82 mM for turanose-6'P</KM>
        <KM evidence="2">1.11 mM for maltulose-6'P</KM>
        <KM evidence="2">1.87 mM for leucrose-6'P</KM>
        <KM evidence="2">2.47 mM for palatinose-6'P</KM>
        <KM evidence="2">1.95 mM for maltose-6'P</KM>
        <Vmax evidence="2">5.2 umol/min/mg enzyme with p-nitrophenyl-alpha-D-glucopyranoside 6-phosphate as substrate</Vmax>
        <Vmax evidence="2">0.43 umol/min/mg enzyme with trehalulose-6'P as substrate</Vmax>
        <Vmax evidence="2">0.82 umol/min/mg enzyme with turanose-6'P as substrate</Vmax>
        <Vmax evidence="2">0.65 umol/min/mg enzyme with maltulose-6'P as substrate</Vmax>
        <Vmax evidence="2">0.12 umol/min/mg enzyme with leucrose-6'P as substrate</Vmax>
        <Vmax evidence="2">0.6 umol/min/mg enzyme with palatinose-6'P as substrate</Vmax>
        <Vmax evidence="2">0.49 umol/min/mg enzyme with maltose-6'P as substrate</Vmax>
    </kinetics>
</comment>
<comment type="subunit">
    <text>Homotetramer.</text>
</comment>
<comment type="induction">
    <text>By maltose and other alpha-glucosides, except sucrose.</text>
</comment>
<comment type="mass spectrometry"/>
<comment type="similarity">
    <text evidence="3">Belongs to the glycosyl hydrolase 4 family.</text>
</comment>
<organism>
    <name type="scientific">Clostridium acetobutylicum (strain ATCC 824 / DSM 792 / JCM 1419 / IAM 19013 / LMG 5710 / NBRC 13948 / NRRL B-527 / VKM B-1787 / 2291 / W)</name>
    <dbReference type="NCBI Taxonomy" id="272562"/>
    <lineage>
        <taxon>Bacteria</taxon>
        <taxon>Bacillati</taxon>
        <taxon>Bacillota</taxon>
        <taxon>Clostridia</taxon>
        <taxon>Eubacteriales</taxon>
        <taxon>Clostridiaceae</taxon>
        <taxon>Clostridium</taxon>
    </lineage>
</organism>
<accession>Q97LM4</accession>
<keyword id="KW-0119">Carbohydrate metabolism</keyword>
<keyword id="KW-0903">Direct protein sequencing</keyword>
<keyword id="KW-0326">Glycosidase</keyword>
<keyword id="KW-0378">Hydrolase</keyword>
<keyword id="KW-0464">Manganese</keyword>
<keyword id="KW-0479">Metal-binding</keyword>
<keyword id="KW-0520">NAD</keyword>
<keyword id="KW-1185">Reference proteome</keyword>
<proteinExistence type="evidence at protein level"/>
<reference key="1">
    <citation type="journal article" date="2001" name="J. Ind. Microbiol. Biotechnol.">
        <title>Characterization of a maltose transport system in Clostridium acetobutylicum ATCC 824.</title>
        <authorList>
            <person name="Tangney M."/>
            <person name="Winters G.T."/>
            <person name="Mitchell W.J."/>
        </authorList>
    </citation>
    <scope>NUCLEOTIDE SEQUENCE [GENOMIC DNA]</scope>
    <source>
        <strain>ATCC 824 / DSM 792 / JCM 1419 / IAM 19013 / LMG 5710 / NBRC 13948 / NRRL B-527 / VKM B-1787 / 2291 / W</strain>
    </source>
</reference>
<reference key="2">
    <citation type="journal article" date="2001" name="J. Bacteriol.">
        <title>Genome sequence and comparative analysis of the solvent-producing bacterium Clostridium acetobutylicum.</title>
        <authorList>
            <person name="Noelling J."/>
            <person name="Breton G."/>
            <person name="Omelchenko M.V."/>
            <person name="Makarova K.S."/>
            <person name="Zeng Q."/>
            <person name="Gibson R."/>
            <person name="Lee H.M."/>
            <person name="Dubois J."/>
            <person name="Qiu D."/>
            <person name="Hitti J."/>
            <person name="Wolf Y.I."/>
            <person name="Tatusov R.L."/>
            <person name="Sabathe F."/>
            <person name="Doucette-Stamm L.A."/>
            <person name="Soucaille P."/>
            <person name="Daly M.J."/>
            <person name="Bennett G.N."/>
            <person name="Koonin E.V."/>
            <person name="Smith D.R."/>
        </authorList>
    </citation>
    <scope>NUCLEOTIDE SEQUENCE [LARGE SCALE GENOMIC DNA]</scope>
    <source>
        <strain>ATCC 824 / DSM 792 / JCM 1419 / IAM 19013 / LMG 5710 / NBRC 13948 / NRRL B-527 / VKM B-1787 / 2291 / W</strain>
    </source>
</reference>
<reference key="3">
    <citation type="journal article" date="2004" name="J. Biol. Chem.">
        <title>Genes malh and pagl of Clostridium acetobutylicum ATCC 824 encode NAD+- and Mn2+-dependent phospho-alpha-glucosidase(s).</title>
        <authorList>
            <person name="Thompson J."/>
            <person name="Hess S."/>
            <person name="Pikis A."/>
        </authorList>
    </citation>
    <scope>PROTEIN SEQUENCE OF 1-29</scope>
    <scope>CHARACTERIZATION</scope>
    <scope>KINETIC PARAMETERS</scope>
    <scope>MUTAGENESIS OF CYS-169; ASP-170; MET-171 AND PRO-172</scope>
    <scope>MASS SPECTROMETRY</scope>
    <source>
        <strain>ATCC 824 / DSM 792 / JCM 1419 / IAM 19013 / LMG 5710 / NBRC 13948 / NRRL B-527 / VKM B-1787 / 2291 / W</strain>
    </source>
</reference>
<feature type="chain" id="PRO_0000169863" description="Maltose-6'-phosphate glucosidase MalH">
    <location>
        <begin position="1"/>
        <end position="441"/>
    </location>
</feature>
<feature type="active site" description="Proton donor" evidence="1">
    <location>
        <position position="170"/>
    </location>
</feature>
<feature type="active site" description="Proton acceptor" evidence="1">
    <location>
        <position position="264"/>
    </location>
</feature>
<feature type="binding site" evidence="1">
    <location>
        <begin position="4"/>
        <end position="70"/>
    </location>
    <ligand>
        <name>NAD(+)</name>
        <dbReference type="ChEBI" id="CHEBI:57540"/>
    </ligand>
</feature>
<feature type="binding site" evidence="1">
    <location>
        <position position="93"/>
    </location>
    <ligand>
        <name>substrate</name>
    </ligand>
</feature>
<feature type="binding site" evidence="1">
    <location>
        <position position="147"/>
    </location>
    <ligand>
        <name>substrate</name>
    </ligand>
</feature>
<feature type="binding site" evidence="1">
    <location>
        <position position="169"/>
    </location>
    <ligand>
        <name>Mn(2+)</name>
        <dbReference type="ChEBI" id="CHEBI:29035"/>
    </ligand>
</feature>
<feature type="binding site" evidence="1">
    <location>
        <position position="200"/>
    </location>
    <ligand>
        <name>Mn(2+)</name>
        <dbReference type="ChEBI" id="CHEBI:29035"/>
    </ligand>
</feature>
<feature type="binding site" evidence="1">
    <location>
        <position position="284"/>
    </location>
    <ligand>
        <name>substrate</name>
    </ligand>
</feature>
<feature type="site" description="Increases basicity of active site Tyr" evidence="1">
    <location>
        <position position="109"/>
    </location>
</feature>
<feature type="mutagenesis site" description="Loss of activity." evidence="2">
    <original>C</original>
    <variation>S</variation>
    <location>
        <position position="169"/>
    </location>
</feature>
<feature type="mutagenesis site" description="Loss of activity." evidence="2">
    <original>D</original>
    <variation>N</variation>
    <location>
        <position position="170"/>
    </location>
</feature>
<feature type="mutagenesis site" description="Highly reduced activity." evidence="2">
    <original>M</original>
    <variation>V</variation>
    <location>
        <position position="171"/>
    </location>
</feature>
<feature type="mutagenesis site" description="Reduced activity." evidence="2">
    <original>P</original>
    <variation>A</variation>
    <location>
        <position position="172"/>
    </location>
</feature>
<dbReference type="EC" id="3.2.1.122"/>
<dbReference type="EMBL" id="AF290982">
    <property type="protein sequence ID" value="AAK69556.1"/>
    <property type="molecule type" value="Genomic_DNA"/>
</dbReference>
<dbReference type="EMBL" id="AE001437">
    <property type="protein sequence ID" value="AAK78512.1"/>
    <property type="molecule type" value="Genomic_DNA"/>
</dbReference>
<dbReference type="PIR" id="E96965">
    <property type="entry name" value="E96965"/>
</dbReference>
<dbReference type="RefSeq" id="NP_347172.1">
    <property type="nucleotide sequence ID" value="NC_003030.1"/>
</dbReference>
<dbReference type="RefSeq" id="WP_010963854.1">
    <property type="nucleotide sequence ID" value="NC_003030.1"/>
</dbReference>
<dbReference type="SMR" id="Q97LM4"/>
<dbReference type="STRING" id="272562.CA_C0533"/>
<dbReference type="CAZy" id="GH4">
    <property type="family name" value="Glycoside Hydrolase Family 4"/>
</dbReference>
<dbReference type="KEGG" id="cac:CA_C0533"/>
<dbReference type="PATRIC" id="fig|272562.8.peg.736"/>
<dbReference type="eggNOG" id="COG1486">
    <property type="taxonomic scope" value="Bacteria"/>
</dbReference>
<dbReference type="HOGENOM" id="CLU_045951_2_0_9"/>
<dbReference type="OrthoDB" id="9808275at2"/>
<dbReference type="SABIO-RK" id="Q97LM4"/>
<dbReference type="Proteomes" id="UP000000814">
    <property type="component" value="Chromosome"/>
</dbReference>
<dbReference type="GO" id="GO:0050081">
    <property type="term" value="F:maltose-6'-phosphate glucosidase activity"/>
    <property type="evidence" value="ECO:0007669"/>
    <property type="project" value="UniProtKB-EC"/>
</dbReference>
<dbReference type="GO" id="GO:0046872">
    <property type="term" value="F:metal ion binding"/>
    <property type="evidence" value="ECO:0007669"/>
    <property type="project" value="UniProtKB-KW"/>
</dbReference>
<dbReference type="GO" id="GO:0016616">
    <property type="term" value="F:oxidoreductase activity, acting on the CH-OH group of donors, NAD or NADP as acceptor"/>
    <property type="evidence" value="ECO:0007669"/>
    <property type="project" value="InterPro"/>
</dbReference>
<dbReference type="GO" id="GO:0005975">
    <property type="term" value="P:carbohydrate metabolic process"/>
    <property type="evidence" value="ECO:0007669"/>
    <property type="project" value="InterPro"/>
</dbReference>
<dbReference type="CDD" id="cd05298">
    <property type="entry name" value="GH4_GlvA_pagL_like"/>
    <property type="match status" value="1"/>
</dbReference>
<dbReference type="Gene3D" id="3.90.110.10">
    <property type="entry name" value="Lactate dehydrogenase/glycoside hydrolase, family 4, C-terminal"/>
    <property type="match status" value="1"/>
</dbReference>
<dbReference type="Gene3D" id="3.40.50.720">
    <property type="entry name" value="NAD(P)-binding Rossmann-like Domain"/>
    <property type="match status" value="1"/>
</dbReference>
<dbReference type="InterPro" id="IPR019802">
    <property type="entry name" value="GlycHydrolase_4_CS"/>
</dbReference>
<dbReference type="InterPro" id="IPR001088">
    <property type="entry name" value="Glyco_hydro_4"/>
</dbReference>
<dbReference type="InterPro" id="IPR022616">
    <property type="entry name" value="Glyco_hydro_4_C"/>
</dbReference>
<dbReference type="InterPro" id="IPR015955">
    <property type="entry name" value="Lactate_DH/Glyco_Ohase_4_C"/>
</dbReference>
<dbReference type="InterPro" id="IPR036291">
    <property type="entry name" value="NAD(P)-bd_dom_sf"/>
</dbReference>
<dbReference type="PANTHER" id="PTHR32092">
    <property type="entry name" value="6-PHOSPHO-BETA-GLUCOSIDASE-RELATED"/>
    <property type="match status" value="1"/>
</dbReference>
<dbReference type="PANTHER" id="PTHR32092:SF14">
    <property type="entry name" value="MALTOSE-6'-PHOSPHATE GLUCOSIDASE"/>
    <property type="match status" value="1"/>
</dbReference>
<dbReference type="Pfam" id="PF02056">
    <property type="entry name" value="Glyco_hydro_4"/>
    <property type="match status" value="1"/>
</dbReference>
<dbReference type="Pfam" id="PF11975">
    <property type="entry name" value="Glyco_hydro_4C"/>
    <property type="match status" value="1"/>
</dbReference>
<dbReference type="PRINTS" id="PR00732">
    <property type="entry name" value="GLHYDRLASE4"/>
</dbReference>
<dbReference type="SUPFAM" id="SSF56327">
    <property type="entry name" value="LDH C-terminal domain-like"/>
    <property type="match status" value="1"/>
</dbReference>
<dbReference type="SUPFAM" id="SSF51735">
    <property type="entry name" value="NAD(P)-binding Rossmann-fold domains"/>
    <property type="match status" value="1"/>
</dbReference>
<dbReference type="PROSITE" id="PS01324">
    <property type="entry name" value="GLYCOSYL_HYDROL_F4"/>
    <property type="match status" value="1"/>
</dbReference>